<sequence>MTDTVETIDYSKTLYLPQTDFPMRAGLPEKEPVLVKRWQDMDLYAKLRESAAGRTKYVLHDGPPYANGNIHIGHALNKILKDVITRSFQMRGYDSTYVPGWDCHGLPIEWKIEEQYRAKGKNKDEVPVNEFRKECREFAAHWITVQGGEFQRLGVIGDFKNPYTTMAFHAESRIAGELLKFALSGQLYRGSKPVMWSVVERTALAEAEIEYQDYESDTIWAKFPVANLVVANVVDGQPAELNPDLSDRSLDLLDAHVVIWTTTPWTIPGNRAVSYSPRVAYGLYEVTAAENAFGPEPGEKLIFADALAAESQAKAKITLKRLHHVSAEQLGNLVLSHPFKGLGGGYEFPVPMVAGDHVTDDAGTGFVHTAPGHGREDFDAWMDAAPQLRARGIDTVIPFTVDDAGFFTRDAPGFGPDREGGAARVIDDNGKKGNANQAVIDELIKRNALFARGRLKHSYPHSWRSKKPVIFRNTPQWFVYMDKDLGDGTTLRSRALKAIDDTRFVPAAGQNRIRAMIEERPDWVLSRQRAWGVPIAVFADEDGNVLKDEAVNQRIMDAFEEEGADAWFAAGAKERFLGNHDASKWKQVMDILDVWFDSGSTHVFTLEDRPDLKWPADVYLEGSDQHRGWFHSSLLESCGTRGRAPYDTVVTHGFTMDEDGRKMSKSLGNTVVPQDVIKQSGADILRLWVVTTDYWEDQRLGKNVLQTNIDAYRKLRNTIRWMLGTLAHDDGETVPLEAMPELERLMLHRLAELDEVVRQGYDAFEFKRITRALVDFMVVELSAFYFDIRKDALYCDAPSSVKRKASVQVVRHLFDCLVKWLAPMLPFTMEEAWLDRHPDAVSVHLDQFPEIPADWKNEALAEKWRKVRQVRRVVTGALEIARAQKVIGSSLEAVPVVTINDAALEAAIADVDMAEMAITSDLVIAHGQAPEGAFTLDDVRGVAVVVEKAEDRGLVKCARSWRYTADVGQDPAFPDVSARDAAVLHELKALGRL</sequence>
<reference key="1">
    <citation type="journal article" date="2000" name="DNA Res.">
        <title>Complete genome structure of the nitrogen-fixing symbiotic bacterium Mesorhizobium loti.</title>
        <authorList>
            <person name="Kaneko T."/>
            <person name="Nakamura Y."/>
            <person name="Sato S."/>
            <person name="Asamizu E."/>
            <person name="Kato T."/>
            <person name="Sasamoto S."/>
            <person name="Watanabe A."/>
            <person name="Idesawa K."/>
            <person name="Ishikawa A."/>
            <person name="Kawashima K."/>
            <person name="Kimura T."/>
            <person name="Kishida Y."/>
            <person name="Kiyokawa C."/>
            <person name="Kohara M."/>
            <person name="Matsumoto M."/>
            <person name="Matsuno A."/>
            <person name="Mochizuki Y."/>
            <person name="Nakayama S."/>
            <person name="Nakazaki N."/>
            <person name="Shimpo S."/>
            <person name="Sugimoto M."/>
            <person name="Takeuchi C."/>
            <person name="Yamada M."/>
            <person name="Tabata S."/>
        </authorList>
    </citation>
    <scope>NUCLEOTIDE SEQUENCE [LARGE SCALE GENOMIC DNA]</scope>
    <source>
        <strain>LMG 29417 / CECT 9101 / MAFF 303099</strain>
    </source>
</reference>
<evidence type="ECO:0000255" key="1">
    <source>
        <dbReference type="HAMAP-Rule" id="MF_02002"/>
    </source>
</evidence>
<evidence type="ECO:0000305" key="2"/>
<organism>
    <name type="scientific">Mesorhizobium japonicum (strain LMG 29417 / CECT 9101 / MAFF 303099)</name>
    <name type="common">Mesorhizobium loti (strain MAFF 303099)</name>
    <dbReference type="NCBI Taxonomy" id="266835"/>
    <lineage>
        <taxon>Bacteria</taxon>
        <taxon>Pseudomonadati</taxon>
        <taxon>Pseudomonadota</taxon>
        <taxon>Alphaproteobacteria</taxon>
        <taxon>Hyphomicrobiales</taxon>
        <taxon>Phyllobacteriaceae</taxon>
        <taxon>Mesorhizobium</taxon>
    </lineage>
</organism>
<accession>Q983N4</accession>
<comment type="function">
    <text evidence="1">Catalyzes the attachment of isoleucine to tRNA(Ile). As IleRS can inadvertently accommodate and process structurally similar amino acids such as valine, to avoid such errors it has two additional distinct tRNA(Ile)-dependent editing activities. One activity is designated as 'pretransfer' editing and involves the hydrolysis of activated Val-AMP. The other activity is designated 'posttransfer' editing and involves deacylation of mischarged Val-tRNA(Ile).</text>
</comment>
<comment type="catalytic activity">
    <reaction evidence="1">
        <text>tRNA(Ile) + L-isoleucine + ATP = L-isoleucyl-tRNA(Ile) + AMP + diphosphate</text>
        <dbReference type="Rhea" id="RHEA:11060"/>
        <dbReference type="Rhea" id="RHEA-COMP:9666"/>
        <dbReference type="Rhea" id="RHEA-COMP:9695"/>
        <dbReference type="ChEBI" id="CHEBI:30616"/>
        <dbReference type="ChEBI" id="CHEBI:33019"/>
        <dbReference type="ChEBI" id="CHEBI:58045"/>
        <dbReference type="ChEBI" id="CHEBI:78442"/>
        <dbReference type="ChEBI" id="CHEBI:78528"/>
        <dbReference type="ChEBI" id="CHEBI:456215"/>
        <dbReference type="EC" id="6.1.1.5"/>
    </reaction>
</comment>
<comment type="subunit">
    <text evidence="1">Monomer.</text>
</comment>
<comment type="subcellular location">
    <subcellularLocation>
        <location evidence="1">Cytoplasm</location>
    </subcellularLocation>
</comment>
<comment type="domain">
    <text evidence="1">IleRS has two distinct active sites: one for aminoacylation and one for editing. The misactivated valine is translocated from the active site to the editing site, which sterically excludes the correctly activated isoleucine. The single editing site contains two valyl binding pockets, one specific for each substrate (Val-AMP or Val-tRNA(Ile)).</text>
</comment>
<comment type="similarity">
    <text evidence="1">Belongs to the class-I aminoacyl-tRNA synthetase family. IleS type 1 subfamily.</text>
</comment>
<comment type="sequence caution" evidence="2">
    <conflict type="erroneous initiation">
        <sequence resource="EMBL-CDS" id="BAB53846"/>
    </conflict>
</comment>
<proteinExistence type="inferred from homology"/>
<name>SYI_RHILO</name>
<gene>
    <name evidence="1" type="primary">ileS</name>
    <name type="ordered locus">mlr8250</name>
</gene>
<keyword id="KW-0030">Aminoacyl-tRNA synthetase</keyword>
<keyword id="KW-0067">ATP-binding</keyword>
<keyword id="KW-0963">Cytoplasm</keyword>
<keyword id="KW-0436">Ligase</keyword>
<keyword id="KW-0547">Nucleotide-binding</keyword>
<keyword id="KW-0648">Protein biosynthesis</keyword>
<feature type="chain" id="PRO_0000098453" description="Isoleucine--tRNA ligase">
    <location>
        <begin position="1"/>
        <end position="993"/>
    </location>
</feature>
<feature type="short sequence motif" description="'HIGH' region">
    <location>
        <begin position="64"/>
        <end position="74"/>
    </location>
</feature>
<feature type="short sequence motif" description="'KMSKS' region">
    <location>
        <begin position="662"/>
        <end position="666"/>
    </location>
</feature>
<feature type="binding site" evidence="1">
    <location>
        <position position="621"/>
    </location>
    <ligand>
        <name>L-isoleucyl-5'-AMP</name>
        <dbReference type="ChEBI" id="CHEBI:178002"/>
    </ligand>
</feature>
<feature type="binding site" evidence="1">
    <location>
        <position position="665"/>
    </location>
    <ligand>
        <name>ATP</name>
        <dbReference type="ChEBI" id="CHEBI:30616"/>
    </ligand>
</feature>
<dbReference type="EC" id="6.1.1.5" evidence="1"/>
<dbReference type="EMBL" id="BA000012">
    <property type="protein sequence ID" value="BAB53846.1"/>
    <property type="status" value="ALT_INIT"/>
    <property type="molecule type" value="Genomic_DNA"/>
</dbReference>
<dbReference type="RefSeq" id="WP_080512000.1">
    <property type="nucleotide sequence ID" value="NC_002678.2"/>
</dbReference>
<dbReference type="SMR" id="Q983N4"/>
<dbReference type="KEGG" id="mlo:mlr8250"/>
<dbReference type="eggNOG" id="COG0060">
    <property type="taxonomic scope" value="Bacteria"/>
</dbReference>
<dbReference type="HOGENOM" id="CLU_001493_7_1_5"/>
<dbReference type="Proteomes" id="UP000000552">
    <property type="component" value="Chromosome"/>
</dbReference>
<dbReference type="GO" id="GO:0005829">
    <property type="term" value="C:cytosol"/>
    <property type="evidence" value="ECO:0007669"/>
    <property type="project" value="TreeGrafter"/>
</dbReference>
<dbReference type="GO" id="GO:0002161">
    <property type="term" value="F:aminoacyl-tRNA deacylase activity"/>
    <property type="evidence" value="ECO:0007669"/>
    <property type="project" value="InterPro"/>
</dbReference>
<dbReference type="GO" id="GO:0005524">
    <property type="term" value="F:ATP binding"/>
    <property type="evidence" value="ECO:0007669"/>
    <property type="project" value="UniProtKB-UniRule"/>
</dbReference>
<dbReference type="GO" id="GO:0004822">
    <property type="term" value="F:isoleucine-tRNA ligase activity"/>
    <property type="evidence" value="ECO:0007669"/>
    <property type="project" value="UniProtKB-UniRule"/>
</dbReference>
<dbReference type="GO" id="GO:0000049">
    <property type="term" value="F:tRNA binding"/>
    <property type="evidence" value="ECO:0007669"/>
    <property type="project" value="InterPro"/>
</dbReference>
<dbReference type="GO" id="GO:0006428">
    <property type="term" value="P:isoleucyl-tRNA aminoacylation"/>
    <property type="evidence" value="ECO:0007669"/>
    <property type="project" value="UniProtKB-UniRule"/>
</dbReference>
<dbReference type="CDD" id="cd07960">
    <property type="entry name" value="Anticodon_Ia_Ile_BEm"/>
    <property type="match status" value="1"/>
</dbReference>
<dbReference type="FunFam" id="3.40.50.620:FF:000042">
    <property type="entry name" value="Isoleucine--tRNA ligase"/>
    <property type="match status" value="1"/>
</dbReference>
<dbReference type="Gene3D" id="1.10.730.20">
    <property type="match status" value="1"/>
</dbReference>
<dbReference type="Gene3D" id="3.40.50.620">
    <property type="entry name" value="HUPs"/>
    <property type="match status" value="2"/>
</dbReference>
<dbReference type="Gene3D" id="3.90.740.10">
    <property type="entry name" value="Valyl/Leucyl/Isoleucyl-tRNA synthetase, editing domain"/>
    <property type="match status" value="1"/>
</dbReference>
<dbReference type="HAMAP" id="MF_02002">
    <property type="entry name" value="Ile_tRNA_synth_type1"/>
    <property type="match status" value="1"/>
</dbReference>
<dbReference type="InterPro" id="IPR001412">
    <property type="entry name" value="aa-tRNA-synth_I_CS"/>
</dbReference>
<dbReference type="InterPro" id="IPR002300">
    <property type="entry name" value="aa-tRNA-synth_Ia"/>
</dbReference>
<dbReference type="InterPro" id="IPR033708">
    <property type="entry name" value="Anticodon_Ile_BEm"/>
</dbReference>
<dbReference type="InterPro" id="IPR002301">
    <property type="entry name" value="Ile-tRNA-ligase"/>
</dbReference>
<dbReference type="InterPro" id="IPR023585">
    <property type="entry name" value="Ile-tRNA-ligase_type1"/>
</dbReference>
<dbReference type="InterPro" id="IPR050081">
    <property type="entry name" value="Ile-tRNA_ligase"/>
</dbReference>
<dbReference type="InterPro" id="IPR013155">
    <property type="entry name" value="M/V/L/I-tRNA-synth_anticd-bd"/>
</dbReference>
<dbReference type="InterPro" id="IPR014729">
    <property type="entry name" value="Rossmann-like_a/b/a_fold"/>
</dbReference>
<dbReference type="InterPro" id="IPR009080">
    <property type="entry name" value="tRNAsynth_Ia_anticodon-bd"/>
</dbReference>
<dbReference type="InterPro" id="IPR009008">
    <property type="entry name" value="Val/Leu/Ile-tRNA-synth_edit"/>
</dbReference>
<dbReference type="NCBIfam" id="TIGR00392">
    <property type="entry name" value="ileS"/>
    <property type="match status" value="1"/>
</dbReference>
<dbReference type="PANTHER" id="PTHR42765:SF1">
    <property type="entry name" value="ISOLEUCINE--TRNA LIGASE, MITOCHONDRIAL"/>
    <property type="match status" value="1"/>
</dbReference>
<dbReference type="PANTHER" id="PTHR42765">
    <property type="entry name" value="SOLEUCYL-TRNA SYNTHETASE"/>
    <property type="match status" value="1"/>
</dbReference>
<dbReference type="Pfam" id="PF08264">
    <property type="entry name" value="Anticodon_1"/>
    <property type="match status" value="1"/>
</dbReference>
<dbReference type="Pfam" id="PF00133">
    <property type="entry name" value="tRNA-synt_1"/>
    <property type="match status" value="1"/>
</dbReference>
<dbReference type="PRINTS" id="PR00984">
    <property type="entry name" value="TRNASYNTHILE"/>
</dbReference>
<dbReference type="SUPFAM" id="SSF47323">
    <property type="entry name" value="Anticodon-binding domain of a subclass of class I aminoacyl-tRNA synthetases"/>
    <property type="match status" value="1"/>
</dbReference>
<dbReference type="SUPFAM" id="SSF52374">
    <property type="entry name" value="Nucleotidylyl transferase"/>
    <property type="match status" value="1"/>
</dbReference>
<dbReference type="SUPFAM" id="SSF50677">
    <property type="entry name" value="ValRS/IleRS/LeuRS editing domain"/>
    <property type="match status" value="1"/>
</dbReference>
<dbReference type="PROSITE" id="PS00178">
    <property type="entry name" value="AA_TRNA_LIGASE_I"/>
    <property type="match status" value="1"/>
</dbReference>
<protein>
    <recommendedName>
        <fullName evidence="1">Isoleucine--tRNA ligase</fullName>
        <ecNumber evidence="1">6.1.1.5</ecNumber>
    </recommendedName>
    <alternativeName>
        <fullName evidence="1">Isoleucyl-tRNA synthetase</fullName>
        <shortName evidence="1">IleRS</shortName>
    </alternativeName>
</protein>